<feature type="chain" id="PRO_1000021320" description="Shikimate dehydrogenase (NADP(+))">
    <location>
        <begin position="1"/>
        <end position="260"/>
    </location>
</feature>
<feature type="active site" description="Proton acceptor" evidence="1">
    <location>
        <position position="64"/>
    </location>
</feature>
<feature type="binding site" evidence="1">
    <location>
        <begin position="14"/>
        <end position="16"/>
    </location>
    <ligand>
        <name>shikimate</name>
        <dbReference type="ChEBI" id="CHEBI:36208"/>
    </ligand>
</feature>
<feature type="binding site" evidence="1">
    <location>
        <position position="60"/>
    </location>
    <ligand>
        <name>shikimate</name>
        <dbReference type="ChEBI" id="CHEBI:36208"/>
    </ligand>
</feature>
<feature type="binding site" evidence="1">
    <location>
        <position position="85"/>
    </location>
    <ligand>
        <name>shikimate</name>
        <dbReference type="ChEBI" id="CHEBI:36208"/>
    </ligand>
</feature>
<feature type="binding site" evidence="1">
    <location>
        <position position="100"/>
    </location>
    <ligand>
        <name>shikimate</name>
        <dbReference type="ChEBI" id="CHEBI:36208"/>
    </ligand>
</feature>
<feature type="binding site" evidence="1">
    <location>
        <begin position="121"/>
        <end position="125"/>
    </location>
    <ligand>
        <name>NADP(+)</name>
        <dbReference type="ChEBI" id="CHEBI:58349"/>
    </ligand>
</feature>
<feature type="binding site" evidence="1">
    <location>
        <begin position="145"/>
        <end position="150"/>
    </location>
    <ligand>
        <name>NADP(+)</name>
        <dbReference type="ChEBI" id="CHEBI:58349"/>
    </ligand>
</feature>
<feature type="binding site" evidence="1">
    <location>
        <position position="201"/>
    </location>
    <ligand>
        <name>NADP(+)</name>
        <dbReference type="ChEBI" id="CHEBI:58349"/>
    </ligand>
</feature>
<feature type="binding site" evidence="1">
    <location>
        <position position="203"/>
    </location>
    <ligand>
        <name>shikimate</name>
        <dbReference type="ChEBI" id="CHEBI:36208"/>
    </ligand>
</feature>
<feature type="binding site" evidence="1">
    <location>
        <position position="225"/>
    </location>
    <ligand>
        <name>NADP(+)</name>
        <dbReference type="ChEBI" id="CHEBI:58349"/>
    </ligand>
</feature>
<sequence>MYFAVIGTHVRGKSASPAMHNASFKTLGINAVYIALDVPREELPCFLQLARLNLRGFNVTIPHKEEVVKYLDSVAADARAIGAVNTVLVERNLLVGYNTDASALYQLASSHMKGADVLIVGAGGAARAALFAAIKAEARAVYITNRTYERAEALAREFAEKFKREVKAVRGPVKADVVINATPVYDAVVADLSGASLYVDFAYIPTPRTKMVEEAQRLGIKVIDGVDLLVEQGAQAEKIWLGVEPDRTVMKRAVLEFLGI</sequence>
<gene>
    <name evidence="1" type="primary">aroE</name>
    <name type="ordered locus">Pisl_1764</name>
</gene>
<comment type="function">
    <text evidence="1">Involved in the biosynthesis of the chorismate, which leads to the biosynthesis of aromatic amino acids. Catalyzes the reversible NADPH linked reduction of 3-dehydroshikimate (DHSA) to yield shikimate (SA).</text>
</comment>
<comment type="catalytic activity">
    <reaction evidence="1">
        <text>shikimate + NADP(+) = 3-dehydroshikimate + NADPH + H(+)</text>
        <dbReference type="Rhea" id="RHEA:17737"/>
        <dbReference type="ChEBI" id="CHEBI:15378"/>
        <dbReference type="ChEBI" id="CHEBI:16630"/>
        <dbReference type="ChEBI" id="CHEBI:36208"/>
        <dbReference type="ChEBI" id="CHEBI:57783"/>
        <dbReference type="ChEBI" id="CHEBI:58349"/>
        <dbReference type="EC" id="1.1.1.25"/>
    </reaction>
</comment>
<comment type="pathway">
    <text evidence="1">Metabolic intermediate biosynthesis; chorismate biosynthesis; chorismate from D-erythrose 4-phosphate and phosphoenolpyruvate: step 4/7.</text>
</comment>
<comment type="subunit">
    <text evidence="1">Homodimer.</text>
</comment>
<comment type="similarity">
    <text evidence="1">Belongs to the shikimate dehydrogenase family.</text>
</comment>
<name>AROE_PYRIL</name>
<accession>A1RVD2</accession>
<keyword id="KW-0028">Amino-acid biosynthesis</keyword>
<keyword id="KW-0057">Aromatic amino acid biosynthesis</keyword>
<keyword id="KW-0521">NADP</keyword>
<keyword id="KW-0560">Oxidoreductase</keyword>
<evidence type="ECO:0000255" key="1">
    <source>
        <dbReference type="HAMAP-Rule" id="MF_00222"/>
    </source>
</evidence>
<proteinExistence type="inferred from homology"/>
<reference key="1">
    <citation type="submission" date="2006-12" db="EMBL/GenBank/DDBJ databases">
        <title>Complete sequence of Pyrobaculum islandicum DSM 4184.</title>
        <authorList>
            <person name="Copeland A."/>
            <person name="Lucas S."/>
            <person name="Lapidus A."/>
            <person name="Barry K."/>
            <person name="Detter J.C."/>
            <person name="Glavina del Rio T."/>
            <person name="Dalin E."/>
            <person name="Tice H."/>
            <person name="Pitluck S."/>
            <person name="Meincke L."/>
            <person name="Brettin T."/>
            <person name="Bruce D."/>
            <person name="Han C."/>
            <person name="Tapia R."/>
            <person name="Gilna P."/>
            <person name="Schmutz J."/>
            <person name="Larimer F."/>
            <person name="Land M."/>
            <person name="Hauser L."/>
            <person name="Kyrpides N."/>
            <person name="Mikhailova N."/>
            <person name="Cozen A.E."/>
            <person name="Fitz-Gibbon S.T."/>
            <person name="House C.H."/>
            <person name="Saltikov C."/>
            <person name="Lowe T."/>
            <person name="Richardson P."/>
        </authorList>
    </citation>
    <scope>NUCLEOTIDE SEQUENCE [LARGE SCALE GENOMIC DNA]</scope>
    <source>
        <strain>DSM 4184 / JCM 9189 / GEO3</strain>
    </source>
</reference>
<dbReference type="EC" id="1.1.1.25" evidence="1"/>
<dbReference type="EMBL" id="CP000504">
    <property type="protein sequence ID" value="ABL88914.1"/>
    <property type="molecule type" value="Genomic_DNA"/>
</dbReference>
<dbReference type="RefSeq" id="WP_011763489.1">
    <property type="nucleotide sequence ID" value="NC_008701.1"/>
</dbReference>
<dbReference type="SMR" id="A1RVD2"/>
<dbReference type="STRING" id="384616.Pisl_1764"/>
<dbReference type="GeneID" id="4617755"/>
<dbReference type="KEGG" id="pis:Pisl_1764"/>
<dbReference type="eggNOG" id="arCOG01033">
    <property type="taxonomic scope" value="Archaea"/>
</dbReference>
<dbReference type="HOGENOM" id="CLU_044063_0_1_2"/>
<dbReference type="OrthoDB" id="8744at2157"/>
<dbReference type="UniPathway" id="UPA00053">
    <property type="reaction ID" value="UER00087"/>
</dbReference>
<dbReference type="Proteomes" id="UP000002595">
    <property type="component" value="Chromosome"/>
</dbReference>
<dbReference type="GO" id="GO:0050661">
    <property type="term" value="F:NADP binding"/>
    <property type="evidence" value="ECO:0007669"/>
    <property type="project" value="InterPro"/>
</dbReference>
<dbReference type="GO" id="GO:0004764">
    <property type="term" value="F:shikimate 3-dehydrogenase (NADP+) activity"/>
    <property type="evidence" value="ECO:0007669"/>
    <property type="project" value="UniProtKB-UniRule"/>
</dbReference>
<dbReference type="GO" id="GO:0008652">
    <property type="term" value="P:amino acid biosynthetic process"/>
    <property type="evidence" value="ECO:0007669"/>
    <property type="project" value="UniProtKB-KW"/>
</dbReference>
<dbReference type="GO" id="GO:0009073">
    <property type="term" value="P:aromatic amino acid family biosynthetic process"/>
    <property type="evidence" value="ECO:0007669"/>
    <property type="project" value="UniProtKB-KW"/>
</dbReference>
<dbReference type="GO" id="GO:0009423">
    <property type="term" value="P:chorismate biosynthetic process"/>
    <property type="evidence" value="ECO:0007669"/>
    <property type="project" value="UniProtKB-UniRule"/>
</dbReference>
<dbReference type="GO" id="GO:0019632">
    <property type="term" value="P:shikimate metabolic process"/>
    <property type="evidence" value="ECO:0007669"/>
    <property type="project" value="InterPro"/>
</dbReference>
<dbReference type="Gene3D" id="3.40.50.10860">
    <property type="entry name" value="Leucine Dehydrogenase, chain A, domain 1"/>
    <property type="match status" value="1"/>
</dbReference>
<dbReference type="Gene3D" id="3.40.50.720">
    <property type="entry name" value="NAD(P)-binding Rossmann-like Domain"/>
    <property type="match status" value="1"/>
</dbReference>
<dbReference type="HAMAP" id="MF_00222">
    <property type="entry name" value="Shikimate_DH_AroE"/>
    <property type="match status" value="1"/>
</dbReference>
<dbReference type="InterPro" id="IPR046346">
    <property type="entry name" value="Aminoacid_DH-like_N_sf"/>
</dbReference>
<dbReference type="InterPro" id="IPR036291">
    <property type="entry name" value="NAD(P)-bd_dom_sf"/>
</dbReference>
<dbReference type="InterPro" id="IPR041121">
    <property type="entry name" value="SDH_C"/>
</dbReference>
<dbReference type="InterPro" id="IPR011342">
    <property type="entry name" value="Shikimate_DH"/>
</dbReference>
<dbReference type="InterPro" id="IPR013708">
    <property type="entry name" value="Shikimate_DH-bd_N"/>
</dbReference>
<dbReference type="InterPro" id="IPR022893">
    <property type="entry name" value="Shikimate_DH_fam"/>
</dbReference>
<dbReference type="InterPro" id="IPR006151">
    <property type="entry name" value="Shikm_DH/Glu-tRNA_Rdtase"/>
</dbReference>
<dbReference type="NCBIfam" id="TIGR00507">
    <property type="entry name" value="aroE"/>
    <property type="match status" value="1"/>
</dbReference>
<dbReference type="PANTHER" id="PTHR21089:SF1">
    <property type="entry name" value="BIFUNCTIONAL 3-DEHYDROQUINATE DEHYDRATASE_SHIKIMATE DEHYDROGENASE, CHLOROPLASTIC"/>
    <property type="match status" value="1"/>
</dbReference>
<dbReference type="PANTHER" id="PTHR21089">
    <property type="entry name" value="SHIKIMATE DEHYDROGENASE"/>
    <property type="match status" value="1"/>
</dbReference>
<dbReference type="Pfam" id="PF18317">
    <property type="entry name" value="SDH_C"/>
    <property type="match status" value="1"/>
</dbReference>
<dbReference type="Pfam" id="PF01488">
    <property type="entry name" value="Shikimate_DH"/>
    <property type="match status" value="1"/>
</dbReference>
<dbReference type="Pfam" id="PF08501">
    <property type="entry name" value="Shikimate_dh_N"/>
    <property type="match status" value="1"/>
</dbReference>
<dbReference type="SUPFAM" id="SSF53223">
    <property type="entry name" value="Aminoacid dehydrogenase-like, N-terminal domain"/>
    <property type="match status" value="1"/>
</dbReference>
<dbReference type="SUPFAM" id="SSF51735">
    <property type="entry name" value="NAD(P)-binding Rossmann-fold domains"/>
    <property type="match status" value="1"/>
</dbReference>
<protein>
    <recommendedName>
        <fullName evidence="1">Shikimate dehydrogenase (NADP(+))</fullName>
        <shortName evidence="1">SDH</shortName>
        <ecNumber evidence="1">1.1.1.25</ecNumber>
    </recommendedName>
</protein>
<organism>
    <name type="scientific">Pyrobaculum islandicum (strain DSM 4184 / JCM 9189 / GEO3)</name>
    <dbReference type="NCBI Taxonomy" id="384616"/>
    <lineage>
        <taxon>Archaea</taxon>
        <taxon>Thermoproteota</taxon>
        <taxon>Thermoprotei</taxon>
        <taxon>Thermoproteales</taxon>
        <taxon>Thermoproteaceae</taxon>
        <taxon>Pyrobaculum</taxon>
    </lineage>
</organism>